<evidence type="ECO:0000250" key="1"/>
<evidence type="ECO:0000269" key="2">
    <source>
    </source>
</evidence>
<evidence type="ECO:0000305" key="3"/>
<evidence type="ECO:0007829" key="4">
    <source>
        <dbReference type="PDB" id="3JCU"/>
    </source>
</evidence>
<sequence>MAASLQASTTFLQPTKVASRNTLQLRSTQNVCKAFGVESASSGGRLSLSLQSDLKELANKCVDATKLAGLALATSALIASGANAEGGKRLTYDEIQSKTYLEVKGTGTANQCPTVEGGVDSFAFKPGKYTAKKFCLEPTKFAVKAEGISKNSGPDFQNTKLMTRLTYTLDEIEGPFEVSSDGTVKFEEKDGIDYAAVTVQLPGGERVPFLFTIKQLVASGKPESFSGDFLVPSYRGSSFLDPKGRGGSTGYDNAVALPAGGRGDEEELQKENNKNVASSKGTITLSVTSSKPETGEVIGVFQSLQPSDTDLGAKVPKDVKIEGVWYAQLEQQ</sequence>
<gene>
    <name type="primary">PSBO</name>
</gene>
<comment type="function">
    <text evidence="1">Stabilizes the manganese cluster which is the primary site of water splitting (By similarity). Binds GTP after preillumination of photosystem II core complex. This binding is inhibited by DCMU.</text>
</comment>
<comment type="subcellular location">
    <subcellularLocation>
        <location evidence="2">Plastid</location>
        <location evidence="2">Chloroplast thylakoid membrane</location>
    </subcellularLocation>
    <text>Associated with the photosystem II complex.</text>
</comment>
<comment type="similarity">
    <text evidence="3">Belongs to the PsbO family.</text>
</comment>
<proteinExistence type="evidence at protein level"/>
<protein>
    <recommendedName>
        <fullName>Oxygen-evolving enhancer protein 1, chloroplastic</fullName>
        <shortName>OEE1</shortName>
    </recommendedName>
    <alternativeName>
        <fullName>33 kDa subunit of oxygen evolving system of photosystem II</fullName>
    </alternativeName>
    <alternativeName>
        <fullName>33 kDa thylakoid membrane protein</fullName>
    </alternativeName>
    <alternativeName>
        <fullName>OEC 33 kDa subunit</fullName>
    </alternativeName>
</protein>
<dbReference type="EMBL" id="X05548">
    <property type="protein sequence ID" value="CAA29062.1"/>
    <property type="molecule type" value="mRNA"/>
</dbReference>
<dbReference type="PIR" id="A23613">
    <property type="entry name" value="A23613"/>
</dbReference>
<dbReference type="PIR" id="S00415">
    <property type="entry name" value="S00415"/>
</dbReference>
<dbReference type="PDB" id="3JCU">
    <property type="method" value="EM"/>
    <property type="resolution" value="3.20 A"/>
    <property type="chains" value="O/o=1-332"/>
</dbReference>
<dbReference type="PDB" id="8Z9D">
    <property type="method" value="EM"/>
    <property type="resolution" value="3.22 A"/>
    <property type="chains" value="O/OO/Oo/o=1-332"/>
</dbReference>
<dbReference type="PDBsum" id="3JCU"/>
<dbReference type="PDBsum" id="8Z9D"/>
<dbReference type="EMDB" id="EMD-39860"/>
<dbReference type="SMR" id="P12359"/>
<dbReference type="DIP" id="DIP-62020N"/>
<dbReference type="IntAct" id="P12359">
    <property type="interactions" value="1"/>
</dbReference>
<dbReference type="Proteomes" id="UP001155700">
    <property type="component" value="Unplaced"/>
</dbReference>
<dbReference type="GO" id="GO:0030095">
    <property type="term" value="C:chloroplast photosystem II"/>
    <property type="evidence" value="ECO:0000314"/>
    <property type="project" value="CAFA"/>
</dbReference>
<dbReference type="GO" id="GO:0009654">
    <property type="term" value="C:photosystem II oxygen evolving complex"/>
    <property type="evidence" value="ECO:0000315"/>
    <property type="project" value="CAFA"/>
</dbReference>
<dbReference type="GO" id="GO:0010242">
    <property type="term" value="F:oxygen evolving activity"/>
    <property type="evidence" value="ECO:0000315"/>
    <property type="project" value="CAFA"/>
</dbReference>
<dbReference type="GO" id="GO:0019684">
    <property type="term" value="P:photosynthesis, light reaction"/>
    <property type="evidence" value="ECO:0000315"/>
    <property type="project" value="CAFA"/>
</dbReference>
<dbReference type="GO" id="GO:0010207">
    <property type="term" value="P:photosystem II assembly"/>
    <property type="evidence" value="ECO:0000315"/>
    <property type="project" value="CAFA"/>
</dbReference>
<dbReference type="GO" id="GO:0042549">
    <property type="term" value="P:photosystem II stabilization"/>
    <property type="evidence" value="ECO:0007669"/>
    <property type="project" value="InterPro"/>
</dbReference>
<dbReference type="FunFam" id="3.30.2050.10:FF:000001">
    <property type="entry name" value="Oxygen-evolving enhancer protein 1, chloroplastic"/>
    <property type="match status" value="1"/>
</dbReference>
<dbReference type="Gene3D" id="3.30.2050.10">
    <property type="entry name" value="photosynthetic oxygen evolving center domain"/>
    <property type="match status" value="1"/>
</dbReference>
<dbReference type="Gene3D" id="2.40.160.30">
    <property type="entry name" value="Photosystem II, cytochrome c-550 precursor"/>
    <property type="match status" value="1"/>
</dbReference>
<dbReference type="InterPro" id="IPR011250">
    <property type="entry name" value="OMP/PagP_b-brl"/>
</dbReference>
<dbReference type="InterPro" id="IPR002628">
    <property type="entry name" value="PsbO"/>
</dbReference>
<dbReference type="PANTHER" id="PTHR34058">
    <property type="entry name" value="OXYGEN-EVOLVING ENHANCER PROTEIN 1-2, CHLOROPLASTIC"/>
    <property type="match status" value="1"/>
</dbReference>
<dbReference type="Pfam" id="PF01716">
    <property type="entry name" value="MSP"/>
    <property type="match status" value="1"/>
</dbReference>
<dbReference type="SUPFAM" id="SSF56925">
    <property type="entry name" value="OMPA-like"/>
    <property type="match status" value="1"/>
</dbReference>
<name>PSBO_SPIOL</name>
<accession>P12359</accession>
<organism>
    <name type="scientific">Spinacia oleracea</name>
    <name type="common">Spinach</name>
    <dbReference type="NCBI Taxonomy" id="3562"/>
    <lineage>
        <taxon>Eukaryota</taxon>
        <taxon>Viridiplantae</taxon>
        <taxon>Streptophyta</taxon>
        <taxon>Embryophyta</taxon>
        <taxon>Tracheophyta</taxon>
        <taxon>Spermatophyta</taxon>
        <taxon>Magnoliopsida</taxon>
        <taxon>eudicotyledons</taxon>
        <taxon>Gunneridae</taxon>
        <taxon>Pentapetalae</taxon>
        <taxon>Caryophyllales</taxon>
        <taxon>Chenopodiaceae</taxon>
        <taxon>Chenopodioideae</taxon>
        <taxon>Anserineae</taxon>
        <taxon>Spinacia</taxon>
    </lineage>
</organism>
<reference key="1">
    <citation type="journal article" date="1987" name="Mol. Gen. Genet.">
        <title>Nucleotide sequence of cDNA clones encoding the complete '33 kDa' precursor protein associated with the photosynthetic oxygen-evolving complex from spinach.</title>
        <authorList>
            <person name="Tyagi A."/>
            <person name="Hermans J."/>
            <person name="Steppuhn R.C.J."/>
            <person name="Jansson C."/>
            <person name="Vater F."/>
            <person name="Herrmann R.G."/>
        </authorList>
    </citation>
    <scope>NUCLEOTIDE SEQUENCE [MRNA]</scope>
</reference>
<reference key="2">
    <citation type="journal article" date="1986" name="FEBS Lett.">
        <title>Complete amino acid sequence of 33 kDa protein isolated from spinach photosystem II particles.</title>
        <authorList>
            <person name="Oh-Oka H."/>
            <person name="Tanaka S."/>
            <person name="Wada K."/>
            <person name="Kuwabara T."/>
            <person name="Murata N."/>
        </authorList>
    </citation>
    <scope>PROTEIN SEQUENCE OF 85-332</scope>
</reference>
<reference key="3">
    <citation type="journal article" date="1986" name="FEBS Lett.">
        <title>Improved purification and N-terminal sequence of the 33-kDa protein in spinach PS II.</title>
        <authorList>
            <person name="Yamamoto Y."/>
            <person name="Hermodson M.A."/>
            <person name="Krogmann D.W."/>
        </authorList>
    </citation>
    <scope>PROTEIN SEQUENCE OF 85-121</scope>
</reference>
<reference key="4">
    <citation type="journal article" date="2004" name="Proc. Natl. Acad. Sci. U.S.A.">
        <title>Multiple evidence for nucleotide metabolism in the chloroplast thylakoid lumen.</title>
        <authorList>
            <person name="Spetea C."/>
            <person name="Hundal T."/>
            <person name="Lundin B."/>
            <person name="Heddad M."/>
            <person name="Adamska I."/>
            <person name="Andersson B."/>
        </authorList>
    </citation>
    <scope>PROTEIN SEQUENCE OF 85-91</scope>
    <scope>SUBCELLULAR LOCATION</scope>
    <scope>CHARACTERIZATION</scope>
</reference>
<feature type="transit peptide" description="Chloroplast">
    <location>
        <begin position="1"/>
        <end status="unknown"/>
    </location>
</feature>
<feature type="transit peptide" description="Thylakoid">
    <location>
        <begin status="unknown"/>
        <end position="84"/>
    </location>
</feature>
<feature type="chain" id="PRO_0000029561" description="Oxygen-evolving enhancer protein 1, chloroplastic">
    <location>
        <begin position="85"/>
        <end position="332"/>
    </location>
</feature>
<feature type="sequence conflict" description="In Ref. 3; AA sequence." evidence="3" ref="3">
    <original>Q</original>
    <variation>N</variation>
    <location>
        <position position="96"/>
    </location>
</feature>
<feature type="sequence conflict" description="In Ref. 3; AA sequence." evidence="3" ref="3">
    <original>Q</original>
    <variation>E</variation>
    <location>
        <position position="111"/>
    </location>
</feature>
<feature type="sequence conflict" description="In Ref. 3; AA sequence." evidence="3" ref="3">
    <original>D</original>
    <variation>K</variation>
    <location>
        <position position="120"/>
    </location>
</feature>
<feature type="helix" evidence="4">
    <location>
        <begin position="92"/>
        <end position="97"/>
    </location>
</feature>
<feature type="helix" evidence="4">
    <location>
        <begin position="100"/>
        <end position="103"/>
    </location>
</feature>
<feature type="turn" evidence="4">
    <location>
        <begin position="104"/>
        <end position="106"/>
    </location>
</feature>
<feature type="helix" evidence="4">
    <location>
        <begin position="108"/>
        <end position="110"/>
    </location>
</feature>
<feature type="strand" evidence="4">
    <location>
        <begin position="136"/>
        <end position="144"/>
    </location>
</feature>
<feature type="strand" evidence="4">
    <location>
        <begin position="161"/>
        <end position="163"/>
    </location>
</feature>
<feature type="strand" evidence="4">
    <location>
        <begin position="194"/>
        <end position="200"/>
    </location>
</feature>
<feature type="strand" evidence="4">
    <location>
        <begin position="206"/>
        <end position="212"/>
    </location>
</feature>
<feature type="strand" evidence="4">
    <location>
        <begin position="217"/>
        <end position="220"/>
    </location>
</feature>
<feature type="helix" evidence="4">
    <location>
        <begin position="222"/>
        <end position="224"/>
    </location>
</feature>
<feature type="strand" evidence="4">
    <location>
        <begin position="225"/>
        <end position="231"/>
    </location>
</feature>
<feature type="strand" evidence="4">
    <location>
        <begin position="245"/>
        <end position="253"/>
    </location>
</feature>
<feature type="helix" evidence="4">
    <location>
        <begin position="258"/>
        <end position="263"/>
    </location>
</feature>
<feature type="turn" evidence="4">
    <location>
        <begin position="266"/>
        <end position="268"/>
    </location>
</feature>
<feature type="helix" evidence="4">
    <location>
        <begin position="269"/>
        <end position="272"/>
    </location>
</feature>
<feature type="strand" evidence="4">
    <location>
        <begin position="279"/>
        <end position="290"/>
    </location>
</feature>
<feature type="turn" evidence="4">
    <location>
        <begin position="292"/>
        <end position="294"/>
    </location>
</feature>
<feature type="strand" evidence="4">
    <location>
        <begin position="296"/>
        <end position="302"/>
    </location>
</feature>
<feature type="strand" evidence="4">
    <location>
        <begin position="318"/>
        <end position="328"/>
    </location>
</feature>
<keyword id="KW-0002">3D-structure</keyword>
<keyword id="KW-0150">Chloroplast</keyword>
<keyword id="KW-0903">Direct protein sequencing</keyword>
<keyword id="KW-0464">Manganese</keyword>
<keyword id="KW-0472">Membrane</keyword>
<keyword id="KW-0602">Photosynthesis</keyword>
<keyword id="KW-0604">Photosystem II</keyword>
<keyword id="KW-0934">Plastid</keyword>
<keyword id="KW-1185">Reference proteome</keyword>
<keyword id="KW-0793">Thylakoid</keyword>
<keyword id="KW-0809">Transit peptide</keyword>